<sequence length="349" mass="39560">YEVGMMKGGIRKDRRGGRMLKHKRQREENDSRNAGALTEARSTALWPSPLMIKHSKKNSPALSLTADQMVSALLEAEPPVVYSEYDPSRPFNEASVMTLLTNLADRELVHMINWAKRVPGFVDLALHDQVHLLECAWLEILMVGLVWRSMEHPGKLLFAPNLLLDRSHGKVVEGFVEIFDMLLAASSRFRMMNVRGEEFVCLKSIILLNPGIYTYLSSTLKSVEERDHIHRVLDKITDTLMHLMAKSGLSLQQQHRRLAQLLLILSHIRHMSNKGMEHLYSMKCKNVVPLYDLLLEMLDAHRLHAPAAKGSPPSEDDPLNQLAVPSPSMHSLLPCYVNKQEEGNEQEAI</sequence>
<proteinExistence type="evidence at transcript level"/>
<keyword id="KW-0238">DNA-binding</keyword>
<keyword id="KW-0446">Lipid-binding</keyword>
<keyword id="KW-0479">Metal-binding</keyword>
<keyword id="KW-0539">Nucleus</keyword>
<keyword id="KW-0675">Receptor</keyword>
<keyword id="KW-1185">Reference proteome</keyword>
<keyword id="KW-0754">Steroid-binding</keyword>
<keyword id="KW-0804">Transcription</keyword>
<keyword id="KW-0805">Transcription regulation</keyword>
<keyword id="KW-0862">Zinc</keyword>
<keyword id="KW-0863">Zinc-finger</keyword>
<reference key="1">
    <citation type="submission" date="1999-07" db="EMBL/GenBank/DDBJ databases">
        <title>Cloning of the reptilian Anolis carolinensis estrogen receptor ligand binding domain.</title>
        <authorList>
            <person name="Matthews J.B."/>
            <person name="Wade J."/>
            <person name="Zacharewski T.R."/>
        </authorList>
    </citation>
    <scope>NUCLEOTIDE SEQUENCE [MRNA]</scope>
</reference>
<organism>
    <name type="scientific">Anolis carolinensis</name>
    <name type="common">Green anole</name>
    <name type="synonym">American chameleon</name>
    <dbReference type="NCBI Taxonomy" id="28377"/>
    <lineage>
        <taxon>Eukaryota</taxon>
        <taxon>Metazoa</taxon>
        <taxon>Chordata</taxon>
        <taxon>Craniata</taxon>
        <taxon>Vertebrata</taxon>
        <taxon>Euteleostomi</taxon>
        <taxon>Lepidosauria</taxon>
        <taxon>Squamata</taxon>
        <taxon>Bifurcata</taxon>
        <taxon>Unidentata</taxon>
        <taxon>Episquamata</taxon>
        <taxon>Toxicofera</taxon>
        <taxon>Iguania</taxon>
        <taxon>Dactyloidae</taxon>
        <taxon>Anolis</taxon>
    </lineage>
</organism>
<gene>
    <name type="primary">ESR1</name>
    <name type="synonym">NR3A1</name>
</gene>
<comment type="function">
    <text>The steroid hormones and their receptors are involved in the regulation of eukaryotic gene expression and affect cellular proliferation and differentiation in target tissues.</text>
</comment>
<comment type="subunit">
    <text evidence="1">Binds DNA as a homodimer. Can form a heterodimer with ER-beta (By similarity).</text>
</comment>
<comment type="subcellular location">
    <subcellularLocation>
        <location>Nucleus</location>
    </subcellularLocation>
</comment>
<comment type="domain">
    <text>Composed of three domains: a modulating N-terminal domain, a DNA-binding domain and a C-terminal ligand-binding domain.</text>
</comment>
<comment type="similarity">
    <text evidence="5">Belongs to the nuclear hormone receptor family. NR3 subfamily.</text>
</comment>
<evidence type="ECO:0000250" key="1"/>
<evidence type="ECO:0000255" key="2">
    <source>
        <dbReference type="PROSITE-ProRule" id="PRU00407"/>
    </source>
</evidence>
<evidence type="ECO:0000255" key="3">
    <source>
        <dbReference type="PROSITE-ProRule" id="PRU01189"/>
    </source>
</evidence>
<evidence type="ECO:0000256" key="4">
    <source>
        <dbReference type="SAM" id="MobiDB-lite"/>
    </source>
</evidence>
<evidence type="ECO:0000305" key="5"/>
<name>ESR1_ANOCA</name>
<protein>
    <recommendedName>
        <fullName>Estrogen receptor</fullName>
        <shortName>ER</shortName>
    </recommendedName>
    <alternativeName>
        <fullName>ER-alpha</fullName>
    </alternativeName>
    <alternativeName>
        <fullName>Estradiol receptor</fullName>
    </alternativeName>
    <alternativeName>
        <fullName>Nuclear receptor subfamily 3 group A member 1</fullName>
    </alternativeName>
</protein>
<feature type="chain" id="PRO_0000053626" description="Estrogen receptor">
    <location>
        <begin position="1" status="less than"/>
        <end position="349"/>
    </location>
</feature>
<feature type="domain" description="NR LBD" evidence="3">
    <location>
        <begin position="65"/>
        <end position="301"/>
    </location>
</feature>
<feature type="DNA-binding region" description="Nuclear receptor" evidence="2">
    <location>
        <begin position="1" status="less than"/>
        <end position="5"/>
    </location>
</feature>
<feature type="region of interest" description="Disordered" evidence="4">
    <location>
        <begin position="1"/>
        <end position="38"/>
    </location>
</feature>
<feature type="region of interest" description="Disordered" evidence="4">
    <location>
        <begin position="306"/>
        <end position="327"/>
    </location>
</feature>
<feature type="compositionally biased region" description="Basic residues" evidence="4">
    <location>
        <begin position="12"/>
        <end position="24"/>
    </location>
</feature>
<feature type="non-terminal residue">
    <location>
        <position position="1"/>
    </location>
</feature>
<accession>Q9YHT3</accession>
<dbReference type="EMBL" id="AF095911">
    <property type="protein sequence ID" value="AAC64412.2"/>
    <property type="molecule type" value="mRNA"/>
</dbReference>
<dbReference type="SMR" id="Q9YHT3"/>
<dbReference type="STRING" id="28377.ENSACAP00000006106"/>
<dbReference type="eggNOG" id="KOG3575">
    <property type="taxonomic scope" value="Eukaryota"/>
</dbReference>
<dbReference type="InParanoid" id="Q9YHT3"/>
<dbReference type="Proteomes" id="UP000001646">
    <property type="component" value="Unplaced"/>
</dbReference>
<dbReference type="GO" id="GO:0000785">
    <property type="term" value="C:chromatin"/>
    <property type="evidence" value="ECO:0000318"/>
    <property type="project" value="GO_Central"/>
</dbReference>
<dbReference type="GO" id="GO:0005634">
    <property type="term" value="C:nucleus"/>
    <property type="evidence" value="ECO:0000250"/>
    <property type="project" value="UniProtKB"/>
</dbReference>
<dbReference type="GO" id="GO:0034056">
    <property type="term" value="F:estrogen response element binding"/>
    <property type="evidence" value="ECO:0000318"/>
    <property type="project" value="GO_Central"/>
</dbReference>
<dbReference type="GO" id="GO:0004879">
    <property type="term" value="F:nuclear receptor activity"/>
    <property type="evidence" value="ECO:0000318"/>
    <property type="project" value="GO_Central"/>
</dbReference>
<dbReference type="GO" id="GO:0005496">
    <property type="term" value="F:steroid binding"/>
    <property type="evidence" value="ECO:0007669"/>
    <property type="project" value="UniProtKB-KW"/>
</dbReference>
<dbReference type="GO" id="GO:0008270">
    <property type="term" value="F:zinc ion binding"/>
    <property type="evidence" value="ECO:0007669"/>
    <property type="project" value="UniProtKB-KW"/>
</dbReference>
<dbReference type="GO" id="GO:0071391">
    <property type="term" value="P:cellular response to estrogen stimulus"/>
    <property type="evidence" value="ECO:0000318"/>
    <property type="project" value="GO_Central"/>
</dbReference>
<dbReference type="GO" id="GO:0030520">
    <property type="term" value="P:estrogen receptor signaling pathway"/>
    <property type="evidence" value="ECO:0000318"/>
    <property type="project" value="GO_Central"/>
</dbReference>
<dbReference type="GO" id="GO:0006357">
    <property type="term" value="P:regulation of transcription by RNA polymerase II"/>
    <property type="evidence" value="ECO:0000318"/>
    <property type="project" value="GO_Central"/>
</dbReference>
<dbReference type="CDD" id="cd06949">
    <property type="entry name" value="NR_LBD_ER"/>
    <property type="match status" value="1"/>
</dbReference>
<dbReference type="FunFam" id="1.10.565.10:FF:000010">
    <property type="entry name" value="Estrogen receptor"/>
    <property type="match status" value="1"/>
</dbReference>
<dbReference type="Gene3D" id="1.10.565.10">
    <property type="entry name" value="Retinoid X Receptor"/>
    <property type="match status" value="1"/>
</dbReference>
<dbReference type="InterPro" id="IPR035500">
    <property type="entry name" value="NHR-like_dom_sf"/>
</dbReference>
<dbReference type="InterPro" id="IPR000536">
    <property type="entry name" value="Nucl_hrmn_rcpt_lig-bd"/>
</dbReference>
<dbReference type="InterPro" id="IPR050200">
    <property type="entry name" value="Nuclear_hormone_rcpt_NR3"/>
</dbReference>
<dbReference type="InterPro" id="IPR001723">
    <property type="entry name" value="Nuclear_hrmn_rcpt"/>
</dbReference>
<dbReference type="InterPro" id="IPR024736">
    <property type="entry name" value="Oestrogen-typ_rcpt_final_C_dom"/>
</dbReference>
<dbReference type="PANTHER" id="PTHR48092">
    <property type="entry name" value="KNIRPS-RELATED PROTEIN-RELATED"/>
    <property type="match status" value="1"/>
</dbReference>
<dbReference type="Pfam" id="PF12743">
    <property type="entry name" value="ESR1_C"/>
    <property type="match status" value="1"/>
</dbReference>
<dbReference type="Pfam" id="PF00104">
    <property type="entry name" value="Hormone_recep"/>
    <property type="match status" value="1"/>
</dbReference>
<dbReference type="PRINTS" id="PR00398">
    <property type="entry name" value="STRDHORMONER"/>
</dbReference>
<dbReference type="SMART" id="SM00430">
    <property type="entry name" value="HOLI"/>
    <property type="match status" value="1"/>
</dbReference>
<dbReference type="SUPFAM" id="SSF48508">
    <property type="entry name" value="Nuclear receptor ligand-binding domain"/>
    <property type="match status" value="1"/>
</dbReference>
<dbReference type="PROSITE" id="PS51843">
    <property type="entry name" value="NR_LBD"/>
    <property type="match status" value="1"/>
</dbReference>